<organism>
    <name type="scientific">Shewanella baltica (strain OS155 / ATCC BAA-1091)</name>
    <dbReference type="NCBI Taxonomy" id="325240"/>
    <lineage>
        <taxon>Bacteria</taxon>
        <taxon>Pseudomonadati</taxon>
        <taxon>Pseudomonadota</taxon>
        <taxon>Gammaproteobacteria</taxon>
        <taxon>Alteromonadales</taxon>
        <taxon>Shewanellaceae</taxon>
        <taxon>Shewanella</taxon>
    </lineage>
</organism>
<comment type="similarity">
    <text evidence="1">Belongs to the bacterial ribosomal protein bL35 family.</text>
</comment>
<protein>
    <recommendedName>
        <fullName evidence="1">Large ribosomal subunit protein bL35</fullName>
    </recommendedName>
    <alternativeName>
        <fullName evidence="2">50S ribosomal protein L35</fullName>
    </alternativeName>
</protein>
<accession>A3D4I4</accession>
<proteinExistence type="inferred from homology"/>
<keyword id="KW-1185">Reference proteome</keyword>
<keyword id="KW-0687">Ribonucleoprotein</keyword>
<keyword id="KW-0689">Ribosomal protein</keyword>
<sequence length="64" mass="7383">MPKMKTDKGVAKRFKKTANGFKRKQAHLRHILTKKSTKRKRHLRAKCLVSKADVPAIARQLPYA</sequence>
<gene>
    <name evidence="1" type="primary">rpmI</name>
    <name type="ordered locus">Sbal_2150</name>
</gene>
<reference key="1">
    <citation type="submission" date="2007-02" db="EMBL/GenBank/DDBJ databases">
        <title>Complete sequence of chromosome of Shewanella baltica OS155.</title>
        <authorList>
            <consortium name="US DOE Joint Genome Institute"/>
            <person name="Copeland A."/>
            <person name="Lucas S."/>
            <person name="Lapidus A."/>
            <person name="Barry K."/>
            <person name="Detter J.C."/>
            <person name="Glavina del Rio T."/>
            <person name="Hammon N."/>
            <person name="Israni S."/>
            <person name="Dalin E."/>
            <person name="Tice H."/>
            <person name="Pitluck S."/>
            <person name="Sims D.R."/>
            <person name="Brettin T."/>
            <person name="Bruce D."/>
            <person name="Han C."/>
            <person name="Tapia R."/>
            <person name="Brainard J."/>
            <person name="Schmutz J."/>
            <person name="Larimer F."/>
            <person name="Land M."/>
            <person name="Hauser L."/>
            <person name="Kyrpides N."/>
            <person name="Mikhailova N."/>
            <person name="Brettar I."/>
            <person name="Klappenbach J."/>
            <person name="Konstantinidis K."/>
            <person name="Rodrigues J."/>
            <person name="Tiedje J."/>
            <person name="Richardson P."/>
        </authorList>
    </citation>
    <scope>NUCLEOTIDE SEQUENCE [LARGE SCALE GENOMIC DNA]</scope>
    <source>
        <strain>OS155 / ATCC BAA-1091</strain>
    </source>
</reference>
<name>RL35_SHEB5</name>
<feature type="chain" id="PRO_1000050761" description="Large ribosomal subunit protein bL35">
    <location>
        <begin position="1"/>
        <end position="64"/>
    </location>
</feature>
<dbReference type="EMBL" id="CP000563">
    <property type="protein sequence ID" value="ABN61647.1"/>
    <property type="molecule type" value="Genomic_DNA"/>
</dbReference>
<dbReference type="RefSeq" id="WP_006081653.1">
    <property type="nucleotide sequence ID" value="NC_009052.1"/>
</dbReference>
<dbReference type="SMR" id="A3D4I4"/>
<dbReference type="STRING" id="325240.Sbal_2150"/>
<dbReference type="GeneID" id="11772455"/>
<dbReference type="KEGG" id="sbl:Sbal_2150"/>
<dbReference type="HOGENOM" id="CLU_169643_1_1_6"/>
<dbReference type="OrthoDB" id="47476at2"/>
<dbReference type="Proteomes" id="UP000001557">
    <property type="component" value="Chromosome"/>
</dbReference>
<dbReference type="GO" id="GO:0022625">
    <property type="term" value="C:cytosolic large ribosomal subunit"/>
    <property type="evidence" value="ECO:0007669"/>
    <property type="project" value="TreeGrafter"/>
</dbReference>
<dbReference type="GO" id="GO:0003735">
    <property type="term" value="F:structural constituent of ribosome"/>
    <property type="evidence" value="ECO:0007669"/>
    <property type="project" value="InterPro"/>
</dbReference>
<dbReference type="GO" id="GO:0006412">
    <property type="term" value="P:translation"/>
    <property type="evidence" value="ECO:0007669"/>
    <property type="project" value="UniProtKB-UniRule"/>
</dbReference>
<dbReference type="FunFam" id="4.10.410.60:FF:000001">
    <property type="entry name" value="50S ribosomal protein L35"/>
    <property type="match status" value="1"/>
</dbReference>
<dbReference type="Gene3D" id="4.10.410.60">
    <property type="match status" value="1"/>
</dbReference>
<dbReference type="HAMAP" id="MF_00514">
    <property type="entry name" value="Ribosomal_bL35"/>
    <property type="match status" value="1"/>
</dbReference>
<dbReference type="InterPro" id="IPR001706">
    <property type="entry name" value="Ribosomal_bL35"/>
</dbReference>
<dbReference type="InterPro" id="IPR021137">
    <property type="entry name" value="Ribosomal_bL35-like"/>
</dbReference>
<dbReference type="InterPro" id="IPR018265">
    <property type="entry name" value="Ribosomal_bL35_CS"/>
</dbReference>
<dbReference type="InterPro" id="IPR037229">
    <property type="entry name" value="Ribosomal_bL35_sf"/>
</dbReference>
<dbReference type="NCBIfam" id="TIGR00001">
    <property type="entry name" value="rpmI_bact"/>
    <property type="match status" value="1"/>
</dbReference>
<dbReference type="PANTHER" id="PTHR33343">
    <property type="entry name" value="54S RIBOSOMAL PROTEIN BL35M"/>
    <property type="match status" value="1"/>
</dbReference>
<dbReference type="PANTHER" id="PTHR33343:SF1">
    <property type="entry name" value="LARGE RIBOSOMAL SUBUNIT PROTEIN BL35M"/>
    <property type="match status" value="1"/>
</dbReference>
<dbReference type="Pfam" id="PF01632">
    <property type="entry name" value="Ribosomal_L35p"/>
    <property type="match status" value="1"/>
</dbReference>
<dbReference type="PRINTS" id="PR00064">
    <property type="entry name" value="RIBOSOMALL35"/>
</dbReference>
<dbReference type="SUPFAM" id="SSF143034">
    <property type="entry name" value="L35p-like"/>
    <property type="match status" value="1"/>
</dbReference>
<dbReference type="PROSITE" id="PS00936">
    <property type="entry name" value="RIBOSOMAL_L35"/>
    <property type="match status" value="1"/>
</dbReference>
<evidence type="ECO:0000255" key="1">
    <source>
        <dbReference type="HAMAP-Rule" id="MF_00514"/>
    </source>
</evidence>
<evidence type="ECO:0000305" key="2"/>